<dbReference type="EMBL" id="AY464052">
    <property type="protein sequence ID" value="AAS45901.1"/>
    <property type="molecule type" value="Genomic_DNA"/>
</dbReference>
<dbReference type="KEGG" id="vg:1487562"/>
<dbReference type="Proteomes" id="UP000008296">
    <property type="component" value="Segment"/>
</dbReference>
<dbReference type="GO" id="GO:0016020">
    <property type="term" value="C:membrane"/>
    <property type="evidence" value="ECO:0007669"/>
    <property type="project" value="UniProtKB-SubCell"/>
</dbReference>
<dbReference type="GO" id="GO:0019033">
    <property type="term" value="C:viral tegument"/>
    <property type="evidence" value="ECO:0007669"/>
    <property type="project" value="InterPro"/>
</dbReference>
<dbReference type="InterPro" id="IPR007764">
    <property type="entry name" value="Herpes_UL43"/>
</dbReference>
<dbReference type="Pfam" id="PF05072">
    <property type="entry name" value="Herpes_UL43"/>
    <property type="match status" value="1"/>
</dbReference>
<organismHost>
    <name type="scientific">Equus caballus</name>
    <name type="common">Horse</name>
    <dbReference type="NCBI Taxonomy" id="9796"/>
</organismHost>
<proteinExistence type="inferred from homology"/>
<organism>
    <name type="scientific">Equine herpesvirus 1 (strain V592)</name>
    <name type="common">EHV-1</name>
    <name type="synonym">Equine abortion virus</name>
    <dbReference type="NCBI Taxonomy" id="310273"/>
    <lineage>
        <taxon>Viruses</taxon>
        <taxon>Duplodnaviria</taxon>
        <taxon>Heunggongvirae</taxon>
        <taxon>Peploviricota</taxon>
        <taxon>Herviviricetes</taxon>
        <taxon>Herpesvirales</taxon>
        <taxon>Orthoherpesviridae</taxon>
        <taxon>Alphaherpesvirinae</taxon>
        <taxon>Varicellovirus</taxon>
        <taxon>Varicellovirus equidalpha1</taxon>
        <taxon>Equid alphaherpesvirus 1</taxon>
    </lineage>
</organism>
<accession>P84400</accession>
<accession>Q6S6Q4</accession>
<protein>
    <recommendedName>
        <fullName>Membrane protein UL43 homolog</fullName>
    </recommendedName>
    <alternativeName>
        <fullName>Membrane protein ORF17</fullName>
    </alternativeName>
</protein>
<reference evidence="2 3" key="1">
    <citation type="submission" date="2003-11" db="EMBL/GenBank/DDBJ databases">
        <authorList>
            <person name="Davis-Poynter N."/>
            <person name="Nugent J."/>
            <person name="Birch-Machin I."/>
            <person name="Allen G.P."/>
        </authorList>
    </citation>
    <scope>NUCLEOTIDE SEQUENCE [LARGE SCALE GENOMIC DNA]</scope>
</reference>
<gene>
    <name type="ordered locus">17</name>
</gene>
<comment type="subcellular location">
    <subcellularLocation>
        <location evidence="2">Membrane</location>
        <topology evidence="2">Multi-pass membrane protein</topology>
    </subcellularLocation>
</comment>
<comment type="similarity">
    <text evidence="2">Belongs to the alphaherpesvirinae HHV-1 UL43 family.</text>
</comment>
<name>MB43_EHV1V</name>
<evidence type="ECO:0000255" key="1"/>
<evidence type="ECO:0000305" key="2"/>
<evidence type="ECO:0000312" key="3">
    <source>
        <dbReference type="EMBL" id="AAS45901.1"/>
    </source>
</evidence>
<keyword id="KW-0472">Membrane</keyword>
<keyword id="KW-0812">Transmembrane</keyword>
<keyword id="KW-1133">Transmembrane helix</keyword>
<feature type="chain" id="PRO_0000116083" description="Membrane protein UL43 homolog">
    <location>
        <begin position="1"/>
        <end position="401"/>
    </location>
</feature>
<feature type="transmembrane region" description="Helical" evidence="1">
    <location>
        <begin position="43"/>
        <end position="63"/>
    </location>
</feature>
<feature type="transmembrane region" description="Helical" evidence="1">
    <location>
        <begin position="67"/>
        <end position="87"/>
    </location>
</feature>
<feature type="transmembrane region" description="Helical" evidence="1">
    <location>
        <begin position="93"/>
        <end position="113"/>
    </location>
</feature>
<feature type="transmembrane region" description="Helical" evidence="1">
    <location>
        <begin position="124"/>
        <end position="144"/>
    </location>
</feature>
<feature type="transmembrane region" description="Helical" evidence="1">
    <location>
        <begin position="159"/>
        <end position="179"/>
    </location>
</feature>
<feature type="transmembrane region" description="Helical" evidence="1">
    <location>
        <begin position="182"/>
        <end position="202"/>
    </location>
</feature>
<feature type="transmembrane region" description="Helical" evidence="1">
    <location>
        <begin position="259"/>
        <end position="279"/>
    </location>
</feature>
<feature type="transmembrane region" description="Helical" evidence="1">
    <location>
        <begin position="294"/>
        <end position="314"/>
    </location>
</feature>
<feature type="transmembrane region" description="Helical" evidence="1">
    <location>
        <begin position="332"/>
        <end position="352"/>
    </location>
</feature>
<feature type="transmembrane region" description="Helical" evidence="1">
    <location>
        <begin position="379"/>
        <end position="399"/>
    </location>
</feature>
<sequence length="401" mass="43205">MMYQPDREPGEDSCLVLSSSSVQRCTGSQRGCMPCTWAASKAFVGIGLQACVLTSSILHIDLLTRNSTCLILMIISMYVLSLIRVPISKMETIVTVCRSIQALATLVAASVWVAGSAVKKEHLLIVVTVCILFVFIAGTQISLFYVICSANGTGTHFRASLLAIIGGCVLGVSVKLVELKDVPIGIGIAIAIIASCQDFGLALRDTCHYRIGRYACMRTFTDLGRGINYRWVTDVEAVPKIEEVAEEKVSLFKFFKEMPGVIFSPAVGTHATPIIWIVLRLVYGISNVWQTPAYVVFCLTVGHVSAMLLEQLVIRVNYTAEASSGIHSTAHAVCMVLAAFGYGVAAPLSLAFTVSGGILGALYLRKRATGARRLAATHISRWLIVCVYVAAGLCYATIITH</sequence>